<comment type="function">
    <text evidence="1">Catalyzes the oxidation of 3-carboxy-2-hydroxy-4-methylpentanoate (3-isopropylmalate) to 3-carboxy-4-methyl-2-oxopentanoate. The product decarboxylates to 4-methyl-2 oxopentanoate.</text>
</comment>
<comment type="catalytic activity">
    <reaction evidence="1">
        <text>(2R,3S)-3-isopropylmalate + NAD(+) = 4-methyl-2-oxopentanoate + CO2 + NADH</text>
        <dbReference type="Rhea" id="RHEA:32271"/>
        <dbReference type="ChEBI" id="CHEBI:16526"/>
        <dbReference type="ChEBI" id="CHEBI:17865"/>
        <dbReference type="ChEBI" id="CHEBI:35121"/>
        <dbReference type="ChEBI" id="CHEBI:57540"/>
        <dbReference type="ChEBI" id="CHEBI:57945"/>
        <dbReference type="EC" id="1.1.1.85"/>
    </reaction>
</comment>
<comment type="cofactor">
    <cofactor evidence="1">
        <name>Mg(2+)</name>
        <dbReference type="ChEBI" id="CHEBI:18420"/>
    </cofactor>
    <cofactor evidence="1">
        <name>Mn(2+)</name>
        <dbReference type="ChEBI" id="CHEBI:29035"/>
    </cofactor>
    <text evidence="1">Binds 1 Mg(2+) or Mn(2+) ion per subunit.</text>
</comment>
<comment type="pathway">
    <text evidence="1">Amino-acid biosynthesis; L-leucine biosynthesis; L-leucine from 3-methyl-2-oxobutanoate: step 3/4.</text>
</comment>
<comment type="subunit">
    <text evidence="1">Homodimer.</text>
</comment>
<comment type="subcellular location">
    <subcellularLocation>
        <location evidence="1">Cytoplasm</location>
    </subcellularLocation>
</comment>
<comment type="similarity">
    <text evidence="1">Belongs to the isocitrate and isopropylmalate dehydrogenases family. LeuB type 1 subfamily.</text>
</comment>
<sequence length="360" mass="38722">MSKQILILPGDGIGPEIMAEAVKVLELANEKYSLGFELSHDVIGGAAIDKHGVPLADETLDRARAADAVLLGAVGGPKWDTIERDIRPERGLLKIRAQLGLFGNLRPAILYPQLADASSLKPEIAAGLDILIVRELTGGIYFGAPRGTRTLENGERQSYDTLPYSESEIRRIARVGFDMARVRGKKLCSVDKANVLASSQLWREVVEQVAKDYPDVELSHMYVDNAAMQLVRAPKQFDVIVTDNMFGDILSDEASMLTGSIGMLPSASLDANNKGMYEPCHGSAPDIAGKGIANPLATILSVSMMLRYSFNLHEAADAIEKAVSVVLDQGLRTGDIFSTGCTKVGTQEMGDAVVAALRNL</sequence>
<keyword id="KW-0028">Amino-acid biosynthesis</keyword>
<keyword id="KW-0100">Branched-chain amino acid biosynthesis</keyword>
<keyword id="KW-0963">Cytoplasm</keyword>
<keyword id="KW-0432">Leucine biosynthesis</keyword>
<keyword id="KW-0460">Magnesium</keyword>
<keyword id="KW-0464">Manganese</keyword>
<keyword id="KW-0479">Metal-binding</keyword>
<keyword id="KW-0520">NAD</keyword>
<keyword id="KW-0560">Oxidoreductase</keyword>
<gene>
    <name evidence="1" type="primary">leuB</name>
    <name type="ordered locus">Pfl01_1892</name>
</gene>
<name>LEU3_PSEPF</name>
<evidence type="ECO:0000255" key="1">
    <source>
        <dbReference type="HAMAP-Rule" id="MF_01033"/>
    </source>
</evidence>
<feature type="chain" id="PRO_0000250126" description="3-isopropylmalate dehydrogenase">
    <location>
        <begin position="1"/>
        <end position="360"/>
    </location>
</feature>
<feature type="binding site" evidence="1">
    <location>
        <begin position="76"/>
        <end position="89"/>
    </location>
    <ligand>
        <name>NAD(+)</name>
        <dbReference type="ChEBI" id="CHEBI:57540"/>
    </ligand>
</feature>
<feature type="binding site" evidence="1">
    <location>
        <position position="96"/>
    </location>
    <ligand>
        <name>substrate</name>
    </ligand>
</feature>
<feature type="binding site" evidence="1">
    <location>
        <position position="106"/>
    </location>
    <ligand>
        <name>substrate</name>
    </ligand>
</feature>
<feature type="binding site" evidence="1">
    <location>
        <position position="134"/>
    </location>
    <ligand>
        <name>substrate</name>
    </ligand>
</feature>
<feature type="binding site" evidence="1">
    <location>
        <position position="224"/>
    </location>
    <ligand>
        <name>Mg(2+)</name>
        <dbReference type="ChEBI" id="CHEBI:18420"/>
    </ligand>
</feature>
<feature type="binding site" evidence="1">
    <location>
        <position position="224"/>
    </location>
    <ligand>
        <name>substrate</name>
    </ligand>
</feature>
<feature type="binding site" evidence="1">
    <location>
        <position position="248"/>
    </location>
    <ligand>
        <name>Mg(2+)</name>
        <dbReference type="ChEBI" id="CHEBI:18420"/>
    </ligand>
</feature>
<feature type="binding site" evidence="1">
    <location>
        <position position="252"/>
    </location>
    <ligand>
        <name>Mg(2+)</name>
        <dbReference type="ChEBI" id="CHEBI:18420"/>
    </ligand>
</feature>
<feature type="binding site" evidence="1">
    <location>
        <begin position="282"/>
        <end position="294"/>
    </location>
    <ligand>
        <name>NAD(+)</name>
        <dbReference type="ChEBI" id="CHEBI:57540"/>
    </ligand>
</feature>
<feature type="site" description="Important for catalysis" evidence="1">
    <location>
        <position position="141"/>
    </location>
</feature>
<feature type="site" description="Important for catalysis" evidence="1">
    <location>
        <position position="192"/>
    </location>
</feature>
<proteinExistence type="inferred from homology"/>
<organism>
    <name type="scientific">Pseudomonas fluorescens (strain Pf0-1)</name>
    <dbReference type="NCBI Taxonomy" id="205922"/>
    <lineage>
        <taxon>Bacteria</taxon>
        <taxon>Pseudomonadati</taxon>
        <taxon>Pseudomonadota</taxon>
        <taxon>Gammaproteobacteria</taxon>
        <taxon>Pseudomonadales</taxon>
        <taxon>Pseudomonadaceae</taxon>
        <taxon>Pseudomonas</taxon>
    </lineage>
</organism>
<accession>Q3KF21</accession>
<dbReference type="EC" id="1.1.1.85" evidence="1"/>
<dbReference type="EMBL" id="CP000094">
    <property type="protein sequence ID" value="ABA73635.1"/>
    <property type="molecule type" value="Genomic_DNA"/>
</dbReference>
<dbReference type="RefSeq" id="WP_011333353.1">
    <property type="nucleotide sequence ID" value="NC_007492.2"/>
</dbReference>
<dbReference type="SMR" id="Q3KF21"/>
<dbReference type="KEGG" id="pfo:Pfl01_1892"/>
<dbReference type="eggNOG" id="COG0473">
    <property type="taxonomic scope" value="Bacteria"/>
</dbReference>
<dbReference type="HOGENOM" id="CLU_031953_0_3_6"/>
<dbReference type="UniPathway" id="UPA00048">
    <property type="reaction ID" value="UER00072"/>
</dbReference>
<dbReference type="Proteomes" id="UP000002704">
    <property type="component" value="Chromosome"/>
</dbReference>
<dbReference type="GO" id="GO:0005829">
    <property type="term" value="C:cytosol"/>
    <property type="evidence" value="ECO:0007669"/>
    <property type="project" value="TreeGrafter"/>
</dbReference>
<dbReference type="GO" id="GO:0003862">
    <property type="term" value="F:3-isopropylmalate dehydrogenase activity"/>
    <property type="evidence" value="ECO:0007669"/>
    <property type="project" value="UniProtKB-UniRule"/>
</dbReference>
<dbReference type="GO" id="GO:0000287">
    <property type="term" value="F:magnesium ion binding"/>
    <property type="evidence" value="ECO:0007669"/>
    <property type="project" value="InterPro"/>
</dbReference>
<dbReference type="GO" id="GO:0051287">
    <property type="term" value="F:NAD binding"/>
    <property type="evidence" value="ECO:0007669"/>
    <property type="project" value="InterPro"/>
</dbReference>
<dbReference type="GO" id="GO:0009098">
    <property type="term" value="P:L-leucine biosynthetic process"/>
    <property type="evidence" value="ECO:0007669"/>
    <property type="project" value="UniProtKB-UniRule"/>
</dbReference>
<dbReference type="FunFam" id="3.40.718.10:FF:000004">
    <property type="entry name" value="3-isopropylmalate dehydrogenase"/>
    <property type="match status" value="1"/>
</dbReference>
<dbReference type="Gene3D" id="3.40.718.10">
    <property type="entry name" value="Isopropylmalate Dehydrogenase"/>
    <property type="match status" value="1"/>
</dbReference>
<dbReference type="HAMAP" id="MF_01033">
    <property type="entry name" value="LeuB_type1"/>
    <property type="match status" value="1"/>
</dbReference>
<dbReference type="InterPro" id="IPR019818">
    <property type="entry name" value="IsoCit/isopropylmalate_DH_CS"/>
</dbReference>
<dbReference type="InterPro" id="IPR024084">
    <property type="entry name" value="IsoPropMal-DH-like_dom"/>
</dbReference>
<dbReference type="InterPro" id="IPR004429">
    <property type="entry name" value="Isopropylmalate_DH"/>
</dbReference>
<dbReference type="NCBIfam" id="TIGR00169">
    <property type="entry name" value="leuB"/>
    <property type="match status" value="1"/>
</dbReference>
<dbReference type="PANTHER" id="PTHR42979">
    <property type="entry name" value="3-ISOPROPYLMALATE DEHYDROGENASE"/>
    <property type="match status" value="1"/>
</dbReference>
<dbReference type="PANTHER" id="PTHR42979:SF1">
    <property type="entry name" value="3-ISOPROPYLMALATE DEHYDROGENASE"/>
    <property type="match status" value="1"/>
</dbReference>
<dbReference type="Pfam" id="PF00180">
    <property type="entry name" value="Iso_dh"/>
    <property type="match status" value="1"/>
</dbReference>
<dbReference type="SMART" id="SM01329">
    <property type="entry name" value="Iso_dh"/>
    <property type="match status" value="1"/>
</dbReference>
<dbReference type="SUPFAM" id="SSF53659">
    <property type="entry name" value="Isocitrate/Isopropylmalate dehydrogenase-like"/>
    <property type="match status" value="1"/>
</dbReference>
<dbReference type="PROSITE" id="PS00470">
    <property type="entry name" value="IDH_IMDH"/>
    <property type="match status" value="1"/>
</dbReference>
<protein>
    <recommendedName>
        <fullName evidence="1">3-isopropylmalate dehydrogenase</fullName>
        <ecNumber evidence="1">1.1.1.85</ecNumber>
    </recommendedName>
    <alternativeName>
        <fullName evidence="1">3-IPM-DH</fullName>
    </alternativeName>
    <alternativeName>
        <fullName evidence="1">Beta-IPM dehydrogenase</fullName>
        <shortName evidence="1">IMDH</shortName>
    </alternativeName>
</protein>
<reference key="1">
    <citation type="journal article" date="2009" name="Genome Biol.">
        <title>Genomic and genetic analyses of diversity and plant interactions of Pseudomonas fluorescens.</title>
        <authorList>
            <person name="Silby M.W."/>
            <person name="Cerdeno-Tarraga A.M."/>
            <person name="Vernikos G.S."/>
            <person name="Giddens S.R."/>
            <person name="Jackson R.W."/>
            <person name="Preston G.M."/>
            <person name="Zhang X.-X."/>
            <person name="Moon C.D."/>
            <person name="Gehrig S.M."/>
            <person name="Godfrey S.A.C."/>
            <person name="Knight C.G."/>
            <person name="Malone J.G."/>
            <person name="Robinson Z."/>
            <person name="Spiers A.J."/>
            <person name="Harris S."/>
            <person name="Challis G.L."/>
            <person name="Yaxley A.M."/>
            <person name="Harris D."/>
            <person name="Seeger K."/>
            <person name="Murphy L."/>
            <person name="Rutter S."/>
            <person name="Squares R."/>
            <person name="Quail M.A."/>
            <person name="Saunders E."/>
            <person name="Mavromatis K."/>
            <person name="Brettin T.S."/>
            <person name="Bentley S.D."/>
            <person name="Hothersall J."/>
            <person name="Stephens E."/>
            <person name="Thomas C.M."/>
            <person name="Parkhill J."/>
            <person name="Levy S.B."/>
            <person name="Rainey P.B."/>
            <person name="Thomson N.R."/>
        </authorList>
    </citation>
    <scope>NUCLEOTIDE SEQUENCE [LARGE SCALE GENOMIC DNA]</scope>
    <source>
        <strain>Pf0-1</strain>
    </source>
</reference>